<organism>
    <name type="scientific">Fusobacterium nucleatum subsp. nucleatum (strain ATCC 25586 / DSM 15643 / BCRC 10681 / CIP 101130 / JCM 8532 / KCTC 2640 / LMG 13131 / VPI 4355)</name>
    <dbReference type="NCBI Taxonomy" id="190304"/>
    <lineage>
        <taxon>Bacteria</taxon>
        <taxon>Fusobacteriati</taxon>
        <taxon>Fusobacteriota</taxon>
        <taxon>Fusobacteriia</taxon>
        <taxon>Fusobacteriales</taxon>
        <taxon>Fusobacteriaceae</taxon>
        <taxon>Fusobacterium</taxon>
    </lineage>
</organism>
<name>ENGB_FUSNN</name>
<gene>
    <name evidence="1" type="primary">engB</name>
    <name type="ordered locus">FN2013</name>
</gene>
<protein>
    <recommendedName>
        <fullName evidence="1">Probable GTP-binding protein EngB</fullName>
    </recommendedName>
</protein>
<comment type="function">
    <text evidence="1">Necessary for normal cell division and for the maintenance of normal septation.</text>
</comment>
<comment type="cofactor">
    <cofactor evidence="1">
        <name>Mg(2+)</name>
        <dbReference type="ChEBI" id="CHEBI:18420"/>
    </cofactor>
</comment>
<comment type="similarity">
    <text evidence="1">Belongs to the TRAFAC class TrmE-Era-EngA-EngB-Septin-like GTPase superfamily. EngB GTPase family.</text>
</comment>
<evidence type="ECO:0000255" key="1">
    <source>
        <dbReference type="HAMAP-Rule" id="MF_00321"/>
    </source>
</evidence>
<keyword id="KW-0131">Cell cycle</keyword>
<keyword id="KW-0132">Cell division</keyword>
<keyword id="KW-0342">GTP-binding</keyword>
<keyword id="KW-0460">Magnesium</keyword>
<keyword id="KW-0479">Metal-binding</keyword>
<keyword id="KW-0547">Nucleotide-binding</keyword>
<keyword id="KW-1185">Reference proteome</keyword>
<keyword id="KW-0717">Septation</keyword>
<accession>Q8RHK1</accession>
<reference key="1">
    <citation type="journal article" date="2002" name="J. Bacteriol.">
        <title>Genome sequence and analysis of the oral bacterium Fusobacterium nucleatum strain ATCC 25586.</title>
        <authorList>
            <person name="Kapatral V."/>
            <person name="Anderson I."/>
            <person name="Ivanova N."/>
            <person name="Reznik G."/>
            <person name="Los T."/>
            <person name="Lykidis A."/>
            <person name="Bhattacharyya A."/>
            <person name="Bartman A."/>
            <person name="Gardner W."/>
            <person name="Grechkin G."/>
            <person name="Zhu L."/>
            <person name="Vasieva O."/>
            <person name="Chu L."/>
            <person name="Kogan Y."/>
            <person name="Chaga O."/>
            <person name="Goltsman E."/>
            <person name="Bernal A."/>
            <person name="Larsen N."/>
            <person name="D'Souza M."/>
            <person name="Walunas T."/>
            <person name="Pusch G."/>
            <person name="Haselkorn R."/>
            <person name="Fonstein M."/>
            <person name="Kyrpides N.C."/>
            <person name="Overbeek R."/>
        </authorList>
    </citation>
    <scope>NUCLEOTIDE SEQUENCE [LARGE SCALE GENOMIC DNA]</scope>
    <source>
        <strain>ATCC 25586 / DSM 15643 / BCRC 10681 / CIP 101130 / JCM 8532 / KCTC 2640 / LMG 13131 / VPI 4355</strain>
    </source>
</reference>
<dbReference type="EMBL" id="AE009951">
    <property type="protein sequence ID" value="AAL94103.1"/>
    <property type="molecule type" value="Genomic_DNA"/>
</dbReference>
<dbReference type="RefSeq" id="NP_602804.1">
    <property type="nucleotide sequence ID" value="NC_003454.1"/>
</dbReference>
<dbReference type="SMR" id="Q8RHK1"/>
<dbReference type="FunCoup" id="Q8RHK1">
    <property type="interactions" value="240"/>
</dbReference>
<dbReference type="STRING" id="190304.FN2013"/>
<dbReference type="PaxDb" id="190304-FN2013"/>
<dbReference type="EnsemblBacteria" id="AAL94103">
    <property type="protein sequence ID" value="AAL94103"/>
    <property type="gene ID" value="FN2013"/>
</dbReference>
<dbReference type="KEGG" id="fnu:FN2013"/>
<dbReference type="PATRIC" id="fig|190304.8.peg.481"/>
<dbReference type="eggNOG" id="COG0218">
    <property type="taxonomic scope" value="Bacteria"/>
</dbReference>
<dbReference type="HOGENOM" id="CLU_033732_3_0_0"/>
<dbReference type="InParanoid" id="Q8RHK1"/>
<dbReference type="BioCyc" id="FNUC190304:G1FZS-500-MONOMER"/>
<dbReference type="Proteomes" id="UP000002521">
    <property type="component" value="Chromosome"/>
</dbReference>
<dbReference type="GO" id="GO:0005829">
    <property type="term" value="C:cytosol"/>
    <property type="evidence" value="ECO:0000318"/>
    <property type="project" value="GO_Central"/>
</dbReference>
<dbReference type="GO" id="GO:0005525">
    <property type="term" value="F:GTP binding"/>
    <property type="evidence" value="ECO:0007669"/>
    <property type="project" value="UniProtKB-UniRule"/>
</dbReference>
<dbReference type="GO" id="GO:0046872">
    <property type="term" value="F:metal ion binding"/>
    <property type="evidence" value="ECO:0007669"/>
    <property type="project" value="UniProtKB-KW"/>
</dbReference>
<dbReference type="GO" id="GO:0000917">
    <property type="term" value="P:division septum assembly"/>
    <property type="evidence" value="ECO:0007669"/>
    <property type="project" value="UniProtKB-KW"/>
</dbReference>
<dbReference type="CDD" id="cd01876">
    <property type="entry name" value="YihA_EngB"/>
    <property type="match status" value="1"/>
</dbReference>
<dbReference type="FunFam" id="3.40.50.300:FF:000098">
    <property type="entry name" value="Probable GTP-binding protein EngB"/>
    <property type="match status" value="1"/>
</dbReference>
<dbReference type="Gene3D" id="3.40.50.300">
    <property type="entry name" value="P-loop containing nucleotide triphosphate hydrolases"/>
    <property type="match status" value="1"/>
</dbReference>
<dbReference type="HAMAP" id="MF_00321">
    <property type="entry name" value="GTPase_EngB"/>
    <property type="match status" value="1"/>
</dbReference>
<dbReference type="InterPro" id="IPR030393">
    <property type="entry name" value="G_ENGB_dom"/>
</dbReference>
<dbReference type="InterPro" id="IPR006073">
    <property type="entry name" value="GTP-bd"/>
</dbReference>
<dbReference type="InterPro" id="IPR019987">
    <property type="entry name" value="GTP-bd_ribosome_bio_YsxC"/>
</dbReference>
<dbReference type="InterPro" id="IPR027417">
    <property type="entry name" value="P-loop_NTPase"/>
</dbReference>
<dbReference type="NCBIfam" id="TIGR03598">
    <property type="entry name" value="GTPase_YsxC"/>
    <property type="match status" value="1"/>
</dbReference>
<dbReference type="PANTHER" id="PTHR11649:SF13">
    <property type="entry name" value="ENGB-TYPE G DOMAIN-CONTAINING PROTEIN"/>
    <property type="match status" value="1"/>
</dbReference>
<dbReference type="PANTHER" id="PTHR11649">
    <property type="entry name" value="MSS1/TRME-RELATED GTP-BINDING PROTEIN"/>
    <property type="match status" value="1"/>
</dbReference>
<dbReference type="Pfam" id="PF01926">
    <property type="entry name" value="MMR_HSR1"/>
    <property type="match status" value="1"/>
</dbReference>
<dbReference type="SUPFAM" id="SSF52540">
    <property type="entry name" value="P-loop containing nucleoside triphosphate hydrolases"/>
    <property type="match status" value="1"/>
</dbReference>
<dbReference type="PROSITE" id="PS51706">
    <property type="entry name" value="G_ENGB"/>
    <property type="match status" value="1"/>
</dbReference>
<feature type="chain" id="PRO_0000157750" description="Probable GTP-binding protein EngB">
    <location>
        <begin position="1"/>
        <end position="194"/>
    </location>
</feature>
<feature type="domain" description="EngB-type G" evidence="1">
    <location>
        <begin position="23"/>
        <end position="194"/>
    </location>
</feature>
<feature type="binding site" evidence="1">
    <location>
        <begin position="31"/>
        <end position="38"/>
    </location>
    <ligand>
        <name>GTP</name>
        <dbReference type="ChEBI" id="CHEBI:37565"/>
    </ligand>
</feature>
<feature type="binding site" evidence="1">
    <location>
        <position position="38"/>
    </location>
    <ligand>
        <name>Mg(2+)</name>
        <dbReference type="ChEBI" id="CHEBI:18420"/>
    </ligand>
</feature>
<feature type="binding site" evidence="1">
    <location>
        <begin position="58"/>
        <end position="62"/>
    </location>
    <ligand>
        <name>GTP</name>
        <dbReference type="ChEBI" id="CHEBI:37565"/>
    </ligand>
</feature>
<feature type="binding site" evidence="1">
    <location>
        <position position="60"/>
    </location>
    <ligand>
        <name>Mg(2+)</name>
        <dbReference type="ChEBI" id="CHEBI:18420"/>
    </ligand>
</feature>
<feature type="binding site" evidence="1">
    <location>
        <begin position="76"/>
        <end position="79"/>
    </location>
    <ligand>
        <name>GTP</name>
        <dbReference type="ChEBI" id="CHEBI:37565"/>
    </ligand>
</feature>
<feature type="binding site" evidence="1">
    <location>
        <begin position="142"/>
        <end position="145"/>
    </location>
    <ligand>
        <name>GTP</name>
        <dbReference type="ChEBI" id="CHEBI:37565"/>
    </ligand>
</feature>
<feature type="binding site" evidence="1">
    <location>
        <begin position="173"/>
        <end position="175"/>
    </location>
    <ligand>
        <name>GTP</name>
        <dbReference type="ChEBI" id="CHEBI:37565"/>
    </ligand>
</feature>
<sequence length="194" mass="22903">MKIKKADFVKSAVYEKDYPEQLDKMEFAFVGRSNVGKSSLINSLTSRLKLARTSKTPGRTQLINYFLINDEFYIVDLPGYGFAKVPKEMKKQWGQTMERYIASKRKKLVFVLLDIRRVPSDEDIEMLEWLEYNEMDYKIIFTKIDKLSNNERAKQLKAIKTRLVFDNEDVFFHSSLTNKGRDEILNFMEEKLNN</sequence>
<proteinExistence type="inferred from homology"/>